<name>Y11A_BPT4</name>
<feature type="chain" id="PRO_0000165159" description="Uncharacterized 6.1 kDa protein in uvsW-uvsY intergenic region">
    <location>
        <begin position="1"/>
        <end position="55"/>
    </location>
</feature>
<protein>
    <recommendedName>
        <fullName>Uncharacterized 6.1 kDa protein in uvsW-uvsY intergenic region</fullName>
    </recommendedName>
</protein>
<sequence>MSDKICVVCKTPIDSALVVETDKGPVHPGPCYNYIKELPVSESSEEQLNETQLLL</sequence>
<organismHost>
    <name type="scientific">Escherichia coli</name>
    <dbReference type="NCBI Taxonomy" id="562"/>
</organismHost>
<keyword id="KW-1185">Reference proteome</keyword>
<gene>
    <name type="primary">y11A</name>
    <name type="synonym">uvsW.1</name>
    <name type="synonym">uvsY.-2</name>
</gene>
<organism>
    <name type="scientific">Enterobacteria phage T4</name>
    <name type="common">Bacteriophage T4</name>
    <dbReference type="NCBI Taxonomy" id="10665"/>
    <lineage>
        <taxon>Viruses</taxon>
        <taxon>Duplodnaviria</taxon>
        <taxon>Heunggongvirae</taxon>
        <taxon>Uroviricota</taxon>
        <taxon>Caudoviricetes</taxon>
        <taxon>Straboviridae</taxon>
        <taxon>Tevenvirinae</taxon>
        <taxon>Tequatrovirus</taxon>
    </lineage>
</organism>
<dbReference type="EMBL" id="M77695">
    <property type="protein sequence ID" value="AAA32551.1"/>
    <property type="molecule type" value="Genomic_DNA"/>
</dbReference>
<dbReference type="EMBL" id="X05134">
    <property type="protein sequence ID" value="CAA28781.1"/>
    <property type="molecule type" value="Genomic_DNA"/>
</dbReference>
<dbReference type="EMBL" id="X04856">
    <property type="protein sequence ID" value="CAA28551.1"/>
    <property type="molecule type" value="Genomic_DNA"/>
</dbReference>
<dbReference type="EMBL" id="AF158101">
    <property type="protein sequence ID" value="AAD42525.1"/>
    <property type="molecule type" value="Genomic_DNA"/>
</dbReference>
<dbReference type="PIR" id="C45963">
    <property type="entry name" value="C45963"/>
</dbReference>
<dbReference type="RefSeq" id="NP_049797.1">
    <property type="nucleotide sequence ID" value="NC_000866.4"/>
</dbReference>
<dbReference type="SMR" id="Q00778"/>
<dbReference type="GeneID" id="1258691"/>
<dbReference type="KEGG" id="vg:1258691"/>
<dbReference type="OrthoDB" id="25546at10239"/>
<dbReference type="Proteomes" id="UP000009087">
    <property type="component" value="Segment"/>
</dbReference>
<dbReference type="InterPro" id="IPR024362">
    <property type="entry name" value="DUF2685"/>
</dbReference>
<dbReference type="Pfam" id="PF10886">
    <property type="entry name" value="DUF2685"/>
    <property type="match status" value="1"/>
</dbReference>
<reference key="1">
    <citation type="journal article" date="1991" name="Virology">
        <title>Two bacteriophage T4 base plate genes (25 and 26) and the DNA repair gene uvsY belong to spatially and temporally overlapping transcription units.</title>
        <authorList>
            <person name="Gruidl M.E."/>
            <person name="Chen T.C."/>
            <person name="Gargano S."/>
            <person name="Storlazzi A."/>
            <person name="Cascino A."/>
            <person name="Mosig G."/>
        </authorList>
    </citation>
    <scope>NUCLEOTIDE SEQUENCE [GENOMIC DNA]</scope>
</reference>
<reference key="2">
    <citation type="journal article" date="1986" name="Genetics">
        <title>Sequence and transcripts of the bacteriophage T4 DNA repair gene uvsY.</title>
        <authorList>
            <person name="Gruidl M.E."/>
            <person name="Mosig G."/>
        </authorList>
    </citation>
    <scope>NUCLEOTIDE SEQUENCE [GENOMIC DNA]</scope>
</reference>
<reference key="3">
    <citation type="journal article" date="2003" name="Microbiol. Mol. Biol. Rev.">
        <title>Bacteriophage T4 genome.</title>
        <authorList>
            <person name="Miller E.S."/>
            <person name="Kutter E."/>
            <person name="Mosig G."/>
            <person name="Arisaka F."/>
            <person name="Kunisawa T."/>
            <person name="Ruger W."/>
        </authorList>
    </citation>
    <scope>NUCLEOTIDE SEQUENCE [LARGE SCALE GENOMIC DNA]</scope>
</reference>
<accession>Q00778</accession>
<proteinExistence type="predicted"/>